<gene>
    <name evidence="6" type="primary">RRT3</name>
    <name evidence="7" type="synonym">OFUT18</name>
    <name evidence="9" type="ordered locus">At2g03280</name>
    <name evidence="11" type="ORF">T18E12.4</name>
    <name evidence="10" type="ORF">T4M8.29</name>
</gene>
<organism>
    <name type="scientific">Arabidopsis thaliana</name>
    <name type="common">Mouse-ear cress</name>
    <dbReference type="NCBI Taxonomy" id="3702"/>
    <lineage>
        <taxon>Eukaryota</taxon>
        <taxon>Viridiplantae</taxon>
        <taxon>Streptophyta</taxon>
        <taxon>Embryophyta</taxon>
        <taxon>Tracheophyta</taxon>
        <taxon>Spermatophyta</taxon>
        <taxon>Magnoliopsida</taxon>
        <taxon>eudicotyledons</taxon>
        <taxon>Gunneridae</taxon>
        <taxon>Pentapetalae</taxon>
        <taxon>rosids</taxon>
        <taxon>malvids</taxon>
        <taxon>Brassicales</taxon>
        <taxon>Brassicaceae</taxon>
        <taxon>Camelineae</taxon>
        <taxon>Arabidopsis</taxon>
    </lineage>
</organism>
<keyword id="KW-0025">Alternative splicing</keyword>
<keyword id="KW-0119">Carbohydrate metabolism</keyword>
<keyword id="KW-0961">Cell wall biogenesis/degradation</keyword>
<keyword id="KW-0294">Fucose metabolism</keyword>
<keyword id="KW-0325">Glycoprotein</keyword>
<keyword id="KW-0328">Glycosyltransferase</keyword>
<keyword id="KW-0333">Golgi apparatus</keyword>
<keyword id="KW-0472">Membrane</keyword>
<keyword id="KW-1185">Reference proteome</keyword>
<keyword id="KW-0735">Signal-anchor</keyword>
<keyword id="KW-0808">Transferase</keyword>
<keyword id="KW-0812">Transmembrane</keyword>
<keyword id="KW-1133">Transmembrane helix</keyword>
<name>RRT3_ARATH</name>
<protein>
    <recommendedName>
        <fullName evidence="6">Rhamnogalacturonan I rhamnosyltransferase 4</fullName>
        <ecNumber evidence="5">2.4.1.351</ecNumber>
    </recommendedName>
    <alternativeName>
        <fullName evidence="7">O-fucosyltransferase 18</fullName>
        <shortName evidence="7">O-FucT-18</shortName>
    </alternativeName>
    <alternativeName>
        <fullName evidence="12">O-fucosyltransferase family protein</fullName>
    </alternativeName>
</protein>
<dbReference type="EC" id="2.4.1.351" evidence="5"/>
<dbReference type="EMBL" id="KY906056">
    <property type="protein sequence ID" value="ARJ31420.1"/>
    <property type="molecule type" value="mRNA"/>
</dbReference>
<dbReference type="EMBL" id="AC005313">
    <property type="protein sequence ID" value="AAM15036.1"/>
    <property type="status" value="ALT_SEQ"/>
    <property type="molecule type" value="Genomic_DNA"/>
</dbReference>
<dbReference type="EMBL" id="AC006284">
    <property type="protein sequence ID" value="AAD17446.1"/>
    <property type="status" value="ALT_SEQ"/>
    <property type="molecule type" value="Genomic_DNA"/>
</dbReference>
<dbReference type="EMBL" id="CP002685">
    <property type="protein sequence ID" value="AEC05682.1"/>
    <property type="molecule type" value="Genomic_DNA"/>
</dbReference>
<dbReference type="EMBL" id="CP002685">
    <property type="protein sequence ID" value="AEC05683.1"/>
    <property type="molecule type" value="Genomic_DNA"/>
</dbReference>
<dbReference type="EMBL" id="BT002839">
    <property type="protein sequence ID" value="AAO22658.1"/>
    <property type="molecule type" value="mRNA"/>
</dbReference>
<dbReference type="EMBL" id="AY600544">
    <property type="protein sequence ID" value="AAT68343.1"/>
    <property type="molecule type" value="mRNA"/>
</dbReference>
<dbReference type="EMBL" id="AY924736">
    <property type="protein sequence ID" value="AAX23811.1"/>
    <property type="molecule type" value="mRNA"/>
</dbReference>
<dbReference type="EMBL" id="AY600545">
    <property type="protein sequence ID" value="AAT68344.1"/>
    <property type="molecule type" value="mRNA"/>
</dbReference>
<dbReference type="PIR" id="T02698">
    <property type="entry name" value="T02698"/>
</dbReference>
<dbReference type="RefSeq" id="NP_001030963.1">
    <molecule id="Q6E279-2"/>
    <property type="nucleotide sequence ID" value="NM_001035886.3"/>
</dbReference>
<dbReference type="RefSeq" id="NP_178427.2">
    <molecule id="Q6E279-1"/>
    <property type="nucleotide sequence ID" value="NM_126379.4"/>
</dbReference>
<dbReference type="FunCoup" id="Q6E279">
    <property type="interactions" value="920"/>
</dbReference>
<dbReference type="STRING" id="3702.Q6E279"/>
<dbReference type="GlyCosmos" id="Q6E279">
    <property type="glycosylation" value="4 sites, No reported glycans"/>
</dbReference>
<dbReference type="GlyGen" id="Q6E279">
    <property type="glycosylation" value="4 sites"/>
</dbReference>
<dbReference type="iPTMnet" id="Q6E279"/>
<dbReference type="PaxDb" id="3702-AT2G03280.2"/>
<dbReference type="ProteomicsDB" id="236201">
    <molecule id="Q6E279-1"/>
</dbReference>
<dbReference type="EnsemblPlants" id="AT2G03280.1">
    <molecule id="Q6E279-1"/>
    <property type="protein sequence ID" value="AT2G03280.1"/>
    <property type="gene ID" value="AT2G03280"/>
</dbReference>
<dbReference type="EnsemblPlants" id="AT2G03280.2">
    <molecule id="Q6E279-2"/>
    <property type="protein sequence ID" value="AT2G03280.2"/>
    <property type="gene ID" value="AT2G03280"/>
</dbReference>
<dbReference type="GeneID" id="814857"/>
<dbReference type="Gramene" id="AT2G03280.1">
    <molecule id="Q6E279-1"/>
    <property type="protein sequence ID" value="AT2G03280.1"/>
    <property type="gene ID" value="AT2G03280"/>
</dbReference>
<dbReference type="Gramene" id="AT2G03280.2">
    <molecule id="Q6E279-2"/>
    <property type="protein sequence ID" value="AT2G03280.2"/>
    <property type="gene ID" value="AT2G03280"/>
</dbReference>
<dbReference type="KEGG" id="ath:AT2G03280"/>
<dbReference type="Araport" id="AT2G03280"/>
<dbReference type="TAIR" id="AT2G03280">
    <property type="gene designation" value="RRT3"/>
</dbReference>
<dbReference type="eggNOG" id="ENOG502QT8R">
    <property type="taxonomic scope" value="Eukaryota"/>
</dbReference>
<dbReference type="HOGENOM" id="CLU_018420_0_0_1"/>
<dbReference type="InParanoid" id="Q6E279"/>
<dbReference type="OMA" id="RIHHTIQ"/>
<dbReference type="PhylomeDB" id="Q6E279"/>
<dbReference type="UniPathway" id="UPA00845"/>
<dbReference type="PRO" id="PR:Q6E279"/>
<dbReference type="Proteomes" id="UP000006548">
    <property type="component" value="Chromosome 2"/>
</dbReference>
<dbReference type="ExpressionAtlas" id="Q6E279">
    <property type="expression patterns" value="baseline and differential"/>
</dbReference>
<dbReference type="GO" id="GO:0009507">
    <property type="term" value="C:chloroplast"/>
    <property type="evidence" value="ECO:0007005"/>
    <property type="project" value="TAIR"/>
</dbReference>
<dbReference type="GO" id="GO:0000139">
    <property type="term" value="C:Golgi membrane"/>
    <property type="evidence" value="ECO:0007669"/>
    <property type="project" value="UniProtKB-SubCell"/>
</dbReference>
<dbReference type="GO" id="GO:0016757">
    <property type="term" value="F:glycosyltransferase activity"/>
    <property type="evidence" value="ECO:0007669"/>
    <property type="project" value="UniProtKB-KW"/>
</dbReference>
<dbReference type="GO" id="GO:0071555">
    <property type="term" value="P:cell wall organization"/>
    <property type="evidence" value="ECO:0007669"/>
    <property type="project" value="UniProtKB-KW"/>
</dbReference>
<dbReference type="GO" id="GO:0006004">
    <property type="term" value="P:fucose metabolic process"/>
    <property type="evidence" value="ECO:0007669"/>
    <property type="project" value="UniProtKB-KW"/>
</dbReference>
<dbReference type="GO" id="GO:0045489">
    <property type="term" value="P:pectin biosynthetic process"/>
    <property type="evidence" value="ECO:0007669"/>
    <property type="project" value="UniProtKB-UniPathway"/>
</dbReference>
<dbReference type="CDD" id="cd11299">
    <property type="entry name" value="O-FucT_plant"/>
    <property type="match status" value="1"/>
</dbReference>
<dbReference type="FunFam" id="3.40.50.11350:FF:000011">
    <property type="entry name" value="O-fucosyltransferase 28"/>
    <property type="match status" value="1"/>
</dbReference>
<dbReference type="InterPro" id="IPR024709">
    <property type="entry name" value="FucosylTrfase_pln"/>
</dbReference>
<dbReference type="InterPro" id="IPR019378">
    <property type="entry name" value="GDP-Fuc_O-FucTrfase"/>
</dbReference>
<dbReference type="PANTHER" id="PTHR31741">
    <property type="entry name" value="OS02G0726500 PROTEIN-RELATED"/>
    <property type="match status" value="1"/>
</dbReference>
<dbReference type="PANTHER" id="PTHR31741:SF68">
    <property type="entry name" value="RHAMNOGALACTURONAN I RHAMNOSYLTRANSFERASE 4"/>
    <property type="match status" value="1"/>
</dbReference>
<dbReference type="Pfam" id="PF10250">
    <property type="entry name" value="O-FucT"/>
    <property type="match status" value="1"/>
</dbReference>
<dbReference type="PIRSF" id="PIRSF009360">
    <property type="entry name" value="UCP009360"/>
    <property type="match status" value="1"/>
</dbReference>
<comment type="function">
    <text evidence="1 5">Glycosyltransferase involved in the formation of rhamnogalacturonan I (RG-I) oligosaccharides in the seed coat mucilage, which is a specialized cell wall with abundant RG-I (By similarity). Transfers the rhamnose residue from UDP-beta-L-rhamnose to RG-I oligosaccharides (PubMed:30082766).</text>
</comment>
<comment type="catalytic activity">
    <reaction evidence="5">
        <text>alpha-D-galacturonosyl-[(1-&gt;2)-alpha-L-rhamnosyl-(1-&gt;4)-alpha-D-galacturonosyl](n) + UDP-beta-L-rhamnose = [(1-&gt;2)-alpha-L-rhamnosyl-(1-&gt;4)-alpha-D-galacturonosyl](n+1) + UDP + H(+)</text>
        <dbReference type="Rhea" id="RHEA:55736"/>
        <dbReference type="Rhea" id="RHEA-COMP:14274"/>
        <dbReference type="Rhea" id="RHEA-COMP:14276"/>
        <dbReference type="ChEBI" id="CHEBI:15378"/>
        <dbReference type="ChEBI" id="CHEBI:58223"/>
        <dbReference type="ChEBI" id="CHEBI:83836"/>
        <dbReference type="ChEBI" id="CHEBI:139158"/>
        <dbReference type="ChEBI" id="CHEBI:139159"/>
        <dbReference type="EC" id="2.4.1.351"/>
    </reaction>
</comment>
<comment type="pathway">
    <text evidence="7">Glycan metabolism; pectin biosynthesis.</text>
</comment>
<comment type="subcellular location">
    <subcellularLocation>
        <location evidence="1">Golgi apparatus membrane</location>
        <topology evidence="3">Single-pass type II membrane protein</topology>
    </subcellularLocation>
</comment>
<comment type="alternative products">
    <event type="alternative splicing"/>
    <isoform>
        <id>Q6E279-1</id>
        <name>1</name>
        <sequence type="displayed"/>
    </isoform>
    <isoform>
        <id>Q6E279-2</id>
        <name>2</name>
        <sequence type="described" ref="VSP_059170"/>
    </isoform>
</comment>
<comment type="similarity">
    <text evidence="8">Belongs to the glycosyltransferase GT106 family.</text>
</comment>
<comment type="sequence caution" evidence="7">
    <conflict type="erroneous gene model prediction">
        <sequence resource="EMBL-CDS" id="AAD17446"/>
    </conflict>
</comment>
<comment type="sequence caution" evidence="7">
    <conflict type="erroneous gene model prediction">
        <sequence resource="EMBL-CDS" id="AAM15036"/>
    </conflict>
</comment>
<reference key="1">
    <citation type="submission" date="2017-04" db="EMBL/GenBank/DDBJ databases">
        <title>Arabidopsis glycosyltransferases: an update.</title>
        <authorList>
            <person name="Zeng W."/>
            <person name="Gluza P."/>
            <person name="Heazlewood J."/>
        </authorList>
    </citation>
    <scope>NUCLEOTIDE SEQUENCE [MRNA] (ISOFORM 1)</scope>
    <source>
        <strain>cv. Columbia</strain>
    </source>
</reference>
<reference key="2">
    <citation type="journal article" date="1999" name="Nature">
        <title>Sequence and analysis of chromosome 2 of the plant Arabidopsis thaliana.</title>
        <authorList>
            <person name="Lin X."/>
            <person name="Kaul S."/>
            <person name="Rounsley S.D."/>
            <person name="Shea T.P."/>
            <person name="Benito M.-I."/>
            <person name="Town C.D."/>
            <person name="Fujii C.Y."/>
            <person name="Mason T.M."/>
            <person name="Bowman C.L."/>
            <person name="Barnstead M.E."/>
            <person name="Feldblyum T.V."/>
            <person name="Buell C.R."/>
            <person name="Ketchum K.A."/>
            <person name="Lee J.J."/>
            <person name="Ronning C.M."/>
            <person name="Koo H.L."/>
            <person name="Moffat K.S."/>
            <person name="Cronin L.A."/>
            <person name="Shen M."/>
            <person name="Pai G."/>
            <person name="Van Aken S."/>
            <person name="Umayam L."/>
            <person name="Tallon L.J."/>
            <person name="Gill J.E."/>
            <person name="Adams M.D."/>
            <person name="Carrera A.J."/>
            <person name="Creasy T.H."/>
            <person name="Goodman H.M."/>
            <person name="Somerville C.R."/>
            <person name="Copenhaver G.P."/>
            <person name="Preuss D."/>
            <person name="Nierman W.C."/>
            <person name="White O."/>
            <person name="Eisen J.A."/>
            <person name="Salzberg S.L."/>
            <person name="Fraser C.M."/>
            <person name="Venter J.C."/>
        </authorList>
    </citation>
    <scope>NUCLEOTIDE SEQUENCE [LARGE SCALE GENOMIC DNA]</scope>
    <source>
        <strain>cv. Columbia</strain>
    </source>
</reference>
<reference key="3">
    <citation type="journal article" date="2017" name="Plant J.">
        <title>Araport11: a complete reannotation of the Arabidopsis thaliana reference genome.</title>
        <authorList>
            <person name="Cheng C.Y."/>
            <person name="Krishnakumar V."/>
            <person name="Chan A.P."/>
            <person name="Thibaud-Nissen F."/>
            <person name="Schobel S."/>
            <person name="Town C.D."/>
        </authorList>
    </citation>
    <scope>GENOME REANNOTATION</scope>
    <source>
        <strain>cv. Columbia</strain>
    </source>
</reference>
<reference key="4">
    <citation type="journal article" date="2003" name="Science">
        <title>Empirical analysis of transcriptional activity in the Arabidopsis genome.</title>
        <authorList>
            <person name="Yamada K."/>
            <person name="Lim J."/>
            <person name="Dale J.M."/>
            <person name="Chen H."/>
            <person name="Shinn P."/>
            <person name="Palm C.J."/>
            <person name="Southwick A.M."/>
            <person name="Wu H.C."/>
            <person name="Kim C.J."/>
            <person name="Nguyen M."/>
            <person name="Pham P.K."/>
            <person name="Cheuk R.F."/>
            <person name="Karlin-Newmann G."/>
            <person name="Liu S.X."/>
            <person name="Lam B."/>
            <person name="Sakano H."/>
            <person name="Wu T."/>
            <person name="Yu G."/>
            <person name="Miranda M."/>
            <person name="Quach H.L."/>
            <person name="Tripp M."/>
            <person name="Chang C.H."/>
            <person name="Lee J.M."/>
            <person name="Toriumi M.J."/>
            <person name="Chan M.M."/>
            <person name="Tang C.C."/>
            <person name="Onodera C.S."/>
            <person name="Deng J.M."/>
            <person name="Akiyama K."/>
            <person name="Ansari Y."/>
            <person name="Arakawa T."/>
            <person name="Banh J."/>
            <person name="Banno F."/>
            <person name="Bowser L."/>
            <person name="Brooks S.Y."/>
            <person name="Carninci P."/>
            <person name="Chao Q."/>
            <person name="Choy N."/>
            <person name="Enju A."/>
            <person name="Goldsmith A.D."/>
            <person name="Gurjal M."/>
            <person name="Hansen N.F."/>
            <person name="Hayashizaki Y."/>
            <person name="Johnson-Hopson C."/>
            <person name="Hsuan V.W."/>
            <person name="Iida K."/>
            <person name="Karnes M."/>
            <person name="Khan S."/>
            <person name="Koesema E."/>
            <person name="Ishida J."/>
            <person name="Jiang P.X."/>
            <person name="Jones T."/>
            <person name="Kawai J."/>
            <person name="Kamiya A."/>
            <person name="Meyers C."/>
            <person name="Nakajima M."/>
            <person name="Narusaka M."/>
            <person name="Seki M."/>
            <person name="Sakurai T."/>
            <person name="Satou M."/>
            <person name="Tamse R."/>
            <person name="Vaysberg M."/>
            <person name="Wallender E.K."/>
            <person name="Wong C."/>
            <person name="Yamamura Y."/>
            <person name="Yuan S."/>
            <person name="Shinozaki K."/>
            <person name="Davis R.W."/>
            <person name="Theologis A."/>
            <person name="Ecker J.R."/>
        </authorList>
    </citation>
    <scope>NUCLEOTIDE SEQUENCE [LARGE SCALE MRNA] (ISOFORM 1)</scope>
    <source>
        <strain>cv. Columbia</strain>
    </source>
</reference>
<reference key="5">
    <citation type="journal article" date="2005" name="Plant Physiol.">
        <title>Analysis of the cDNAs of hypothetical genes on Arabidopsis chromosome 2 reveals numerous transcript variants.</title>
        <authorList>
            <person name="Xiao Y.-L."/>
            <person name="Smith S.R."/>
            <person name="Ishmael N."/>
            <person name="Redman J.C."/>
            <person name="Kumar N."/>
            <person name="Monaghan E.L."/>
            <person name="Ayele M."/>
            <person name="Haas B.J."/>
            <person name="Wu H.C."/>
            <person name="Town C.D."/>
        </authorList>
    </citation>
    <scope>NUCLEOTIDE SEQUENCE [LARGE SCALE MRNA] (ISOFORMS 1 AND 2)</scope>
    <source>
        <strain>cv. Columbia</strain>
    </source>
</reference>
<reference key="6">
    <citation type="journal article" date="2012" name="Front. Plant Sci.">
        <title>Plant glycosyltransferases beyond CAZy: a perspective on DUF families.</title>
        <authorList>
            <person name="Hansen S.F."/>
            <person name="Harholt J."/>
            <person name="Oikawa A."/>
            <person name="Scheller H.V."/>
        </authorList>
    </citation>
    <scope>GENE FAMILY</scope>
    <scope>REVIEW</scope>
</reference>
<reference key="7">
    <citation type="journal article" date="2012" name="PLoS ONE">
        <title>The FRIABLE1 gene product affects cell adhesion in Arabidopsis.</title>
        <authorList>
            <person name="Neumetzler L."/>
            <person name="Humphrey T."/>
            <person name="Lumba S."/>
            <person name="Snyder S."/>
            <person name="Yeats T.H."/>
            <person name="Usadel B."/>
            <person name="Vasilevski A."/>
            <person name="Patel J."/>
            <person name="Rose J.K."/>
            <person name="Persson S."/>
            <person name="Bonetta D."/>
        </authorList>
    </citation>
    <scope>GENE FAMILY</scope>
</reference>
<reference key="8">
    <citation type="journal article" date="2012" name="PLoS ONE">
        <title>Identification of putative rhamnogalacturonan-II specific glycosyltransferases in Arabidopsis using a combination of bioinformatics approaches.</title>
        <authorList>
            <person name="Voxeur A."/>
            <person name="Andre A."/>
            <person name="Breton C."/>
            <person name="Lerouge P."/>
        </authorList>
    </citation>
    <scope>GENE FAMILY</scope>
</reference>
<reference key="9">
    <citation type="journal article" date="2013" name="Plant J.">
        <title>Identification of an additional protein involved in mannan biosynthesis.</title>
        <authorList>
            <person name="Wang Y."/>
            <person name="Mortimer J.C."/>
            <person name="Davis J."/>
            <person name="Dupree P."/>
            <person name="Keegstra K."/>
        </authorList>
    </citation>
    <scope>GENE FAMILY</scope>
</reference>
<reference key="10">
    <citation type="journal article" date="2014" name="Plant J.">
        <title>The plant glycosyltransferase clone collection for functional genomics.</title>
        <authorList>
            <person name="Lao J."/>
            <person name="Oikawa A."/>
            <person name="Bromley J.R."/>
            <person name="McInerney P."/>
            <person name="Suttangkakul A."/>
            <person name="Smith-Moritz A.M."/>
            <person name="Plahar H."/>
            <person name="Chiu T.-Y."/>
            <person name="Gonzalez Fernandez-Nino S.M.G."/>
            <person name="Ebert B."/>
            <person name="Yang F."/>
            <person name="Christiansen K.M."/>
            <person name="Hansen S.F."/>
            <person name="Stonebloom S."/>
            <person name="Adams P.D."/>
            <person name="Ronald P.C."/>
            <person name="Hillson N.J."/>
            <person name="Hadi M.Z."/>
            <person name="Vega-Sanchez M.E."/>
            <person name="Loque D."/>
            <person name="Scheller H.V."/>
            <person name="Heazlewood J.L."/>
        </authorList>
    </citation>
    <scope>WEB RESOURCE</scope>
</reference>
<reference key="11">
    <citation type="journal article" date="2018" name="Nat. Plants">
        <title>Pectin RG-I rhamnosyltransferases represent a novel plant-specific glycosyltransferase family.</title>
        <authorList>
            <person name="Takenaka Y."/>
            <person name="Kato K."/>
            <person name="Ogawa-Ohnishi M."/>
            <person name="Tsuruhama K."/>
            <person name="Kajiura H."/>
            <person name="Yagyu K."/>
            <person name="Takeda A."/>
            <person name="Takeda Y."/>
            <person name="Kunieda T."/>
            <person name="Hara-Nishimura I."/>
            <person name="Kuroha T."/>
            <person name="Nishitani K."/>
            <person name="Matsubayashi Y."/>
            <person name="Ishimizu T."/>
        </authorList>
    </citation>
    <scope>FUNCTION</scope>
    <scope>CATALYTIC ACTIVITY</scope>
</reference>
<feature type="chain" id="PRO_0000442080" description="Rhamnogalacturonan I rhamnosyltransferase 4">
    <location>
        <begin position="1"/>
        <end position="481"/>
    </location>
</feature>
<feature type="transmembrane region" description="Helical; Signal-anchor for type II membrane protein" evidence="7">
    <location>
        <begin position="33"/>
        <end position="55"/>
    </location>
</feature>
<feature type="binding site" evidence="2">
    <location>
        <begin position="258"/>
        <end position="260"/>
    </location>
    <ligand>
        <name>substrate</name>
    </ligand>
</feature>
<feature type="glycosylation site" description="N-linked (GlcNAc...) asparagine" evidence="4">
    <location>
        <position position="85"/>
    </location>
</feature>
<feature type="glycosylation site" description="N-linked (GlcNAc...) asparagine" evidence="4">
    <location>
        <position position="118"/>
    </location>
</feature>
<feature type="glycosylation site" description="N-linked (GlcNAc...) asparagine" evidence="4">
    <location>
        <position position="372"/>
    </location>
</feature>
<feature type="glycosylation site" description="N-linked (GlcNAc...) asparagine" evidence="4">
    <location>
        <position position="432"/>
    </location>
</feature>
<feature type="splice variant" id="VSP_059170" description="In isoform 2.">
    <original>T</original>
    <variation>TRYMFVSHVNDPTRFVCSLKHSFVSSFY</variation>
    <location>
        <position position="135"/>
    </location>
</feature>
<feature type="sequence conflict" description="In Ref. 4; AAO22658." evidence="7" ref="4">
    <original>R</original>
    <variation>W</variation>
    <location>
        <position position="15"/>
    </location>
</feature>
<feature type="sequence conflict" description="In Ref. 5; AAT68344." evidence="7" ref="5">
    <original>R</original>
    <variation>G</variation>
    <location sequence="Q6E279-2">
        <position position="136"/>
    </location>
</feature>
<evidence type="ECO:0000250" key="1">
    <source>
        <dbReference type="UniProtKB" id="Q4V398"/>
    </source>
</evidence>
<evidence type="ECO:0000250" key="2">
    <source>
        <dbReference type="UniProtKB" id="Q9H488"/>
    </source>
</evidence>
<evidence type="ECO:0000255" key="3"/>
<evidence type="ECO:0000255" key="4">
    <source>
        <dbReference type="PROSITE-ProRule" id="PRU00498"/>
    </source>
</evidence>
<evidence type="ECO:0000269" key="5">
    <source>
    </source>
</evidence>
<evidence type="ECO:0000303" key="6">
    <source>
    </source>
</evidence>
<evidence type="ECO:0000305" key="7"/>
<evidence type="ECO:0000305" key="8">
    <source>
    </source>
</evidence>
<evidence type="ECO:0000312" key="9">
    <source>
        <dbReference type="Araport" id="AT2G03280"/>
    </source>
</evidence>
<evidence type="ECO:0000312" key="10">
    <source>
        <dbReference type="EMBL" id="AAD17446.1"/>
    </source>
</evidence>
<evidence type="ECO:0000312" key="11">
    <source>
        <dbReference type="EMBL" id="AAM15036.1"/>
    </source>
</evidence>
<evidence type="ECO:0000312" key="12">
    <source>
        <dbReference type="EMBL" id="ARJ31420.1"/>
    </source>
</evidence>
<accession>Q6E279</accession>
<accession>F4ISA5</accession>
<accession>O81046</accession>
<accession>Q6E278</accession>
<accession>Q84WS1</accession>
<proteinExistence type="evidence at protein level"/>
<sequence>MSVVVGDRSESTLMRSDYKAPPSQAIPKARLQVWFFRVCSCILVWTCLIQLFWHSQIFTGLTNHISRFSLPVQSVPLPPPLPPRNYTSNGILLVSCNGGLNQMRAAICDMVTVARLLNLTLVVPELDKKSFWADTSDFEDIFDIKHFIDSLRDEVRIIRRLPKRYSKKYGFKLFEMPPVSWSNDKYYLQQVLPRFSKRKVIHFVRSDTRLANNGLSLDLQRLRCRVNFQGLRFTPRIEALGSKLVRILQQRGSFVALHLRYEMDMLAFSGCTHGCTDEEAEELKKMRYAYPWWREKEIVSEERRVQGLCPLTPEEAVLVLKALGFQKDTQIYIAAGEIFGGAKRLALLKESFPRIVKKEMLLDPTELQQFQNHSSQMAALDFIVSVASNTFIPTYYGNMAKVVEGHRRYLGFKKTILLDRKRLVELLDLHNNKTLSWDQFAVAVKDAHQGRRMGEPTHRKVISVRPKEEDYFYANPQECIS</sequence>